<sequence length="81" mass="8939">MASLKVFSFALLIVLTFSVIGMIYNVESGGSLCCNSHPKFGKCNTNNDEQRCNRWCHNGCGNGKGGYYKSMSHGGQCHYYC</sequence>
<gene>
    <name type="ordered locus">At1g33607</name>
    <name type="ORF">T1E4</name>
</gene>
<protein>
    <recommendedName>
        <fullName>Putative defensin-like protein 26</fullName>
    </recommendedName>
</protein>
<organism>
    <name type="scientific">Arabidopsis thaliana</name>
    <name type="common">Mouse-ear cress</name>
    <dbReference type="NCBI Taxonomy" id="3702"/>
    <lineage>
        <taxon>Eukaryota</taxon>
        <taxon>Viridiplantae</taxon>
        <taxon>Streptophyta</taxon>
        <taxon>Embryophyta</taxon>
        <taxon>Tracheophyta</taxon>
        <taxon>Spermatophyta</taxon>
        <taxon>Magnoliopsida</taxon>
        <taxon>eudicotyledons</taxon>
        <taxon>Gunneridae</taxon>
        <taxon>Pentapetalae</taxon>
        <taxon>rosids</taxon>
        <taxon>malvids</taxon>
        <taxon>Brassicales</taxon>
        <taxon>Brassicaceae</taxon>
        <taxon>Camelineae</taxon>
        <taxon>Arabidopsis</taxon>
    </lineage>
</organism>
<name>DEF26_ARATH</name>
<keyword id="KW-0929">Antimicrobial</keyword>
<keyword id="KW-1015">Disulfide bond</keyword>
<keyword id="KW-0295">Fungicide</keyword>
<keyword id="KW-0611">Plant defense</keyword>
<keyword id="KW-1185">Reference proteome</keyword>
<keyword id="KW-0964">Secreted</keyword>
<keyword id="KW-0732">Signal</keyword>
<proteinExistence type="uncertain"/>
<accession>Q2V4J2</accession>
<dbReference type="EMBL" id="AC069299">
    <property type="status" value="NOT_ANNOTATED_CDS"/>
    <property type="molecule type" value="Genomic_DNA"/>
</dbReference>
<dbReference type="EMBL" id="CP002684">
    <property type="protein sequence ID" value="AEE31608.1"/>
    <property type="molecule type" value="Genomic_DNA"/>
</dbReference>
<dbReference type="RefSeq" id="NP_001031134.1">
    <property type="nucleotide sequence ID" value="NM_001036057.2"/>
</dbReference>
<dbReference type="PaxDb" id="3702-AT1G33607.1"/>
<dbReference type="EnsemblPlants" id="AT1G33607.1">
    <property type="protein sequence ID" value="AT1G33607.1"/>
    <property type="gene ID" value="AT1G33607"/>
</dbReference>
<dbReference type="GeneID" id="3766900"/>
<dbReference type="Gramene" id="AT1G33607.1">
    <property type="protein sequence ID" value="AT1G33607.1"/>
    <property type="gene ID" value="AT1G33607"/>
</dbReference>
<dbReference type="KEGG" id="ath:AT1G33607"/>
<dbReference type="Araport" id="AT1G33607"/>
<dbReference type="TAIR" id="AT1G33607"/>
<dbReference type="HOGENOM" id="CLU_185732_0_0_1"/>
<dbReference type="InParanoid" id="Q2V4J2"/>
<dbReference type="OMA" id="DKERCNS"/>
<dbReference type="PhylomeDB" id="Q2V4J2"/>
<dbReference type="Proteomes" id="UP000006548">
    <property type="component" value="Chromosome 1"/>
</dbReference>
<dbReference type="ExpressionAtlas" id="Q2V4J2">
    <property type="expression patterns" value="baseline and differential"/>
</dbReference>
<dbReference type="GO" id="GO:0005576">
    <property type="term" value="C:extracellular region"/>
    <property type="evidence" value="ECO:0007669"/>
    <property type="project" value="UniProtKB-SubCell"/>
</dbReference>
<dbReference type="GO" id="GO:0050832">
    <property type="term" value="P:defense response to fungus"/>
    <property type="evidence" value="ECO:0007669"/>
    <property type="project" value="UniProtKB-KW"/>
</dbReference>
<dbReference type="GO" id="GO:0031640">
    <property type="term" value="P:killing of cells of another organism"/>
    <property type="evidence" value="ECO:0007669"/>
    <property type="project" value="UniProtKB-KW"/>
</dbReference>
<dbReference type="InterPro" id="IPR022618">
    <property type="entry name" value="Defensin-like_20-28"/>
</dbReference>
<dbReference type="PANTHER" id="PTHR34453">
    <property type="entry name" value="DEFENSIN-LIKE (DEFL) FAMILY PROTEIN-RELATED"/>
    <property type="match status" value="1"/>
</dbReference>
<dbReference type="PANTHER" id="PTHR34453:SF7">
    <property type="entry name" value="DEFENSIN-LIKE PROTEIN 22-RELATED"/>
    <property type="match status" value="1"/>
</dbReference>
<dbReference type="Pfam" id="PF10868">
    <property type="entry name" value="Defensin_like"/>
    <property type="match status" value="1"/>
</dbReference>
<comment type="subcellular location">
    <subcellularLocation>
        <location evidence="1">Secreted</location>
    </subcellularLocation>
</comment>
<comment type="similarity">
    <text evidence="3">Belongs to the DEFL family.</text>
</comment>
<comment type="caution">
    <text evidence="3">Could be the product of a pseudogene. Lacks 2 of the 4 disulfide bonds, which are conserved features of the family.</text>
</comment>
<reference key="1">
    <citation type="journal article" date="2000" name="Nature">
        <title>Sequence and analysis of chromosome 1 of the plant Arabidopsis thaliana.</title>
        <authorList>
            <person name="Theologis A."/>
            <person name="Ecker J.R."/>
            <person name="Palm C.J."/>
            <person name="Federspiel N.A."/>
            <person name="Kaul S."/>
            <person name="White O."/>
            <person name="Alonso J."/>
            <person name="Altafi H."/>
            <person name="Araujo R."/>
            <person name="Bowman C.L."/>
            <person name="Brooks S.Y."/>
            <person name="Buehler E."/>
            <person name="Chan A."/>
            <person name="Chao Q."/>
            <person name="Chen H."/>
            <person name="Cheuk R.F."/>
            <person name="Chin C.W."/>
            <person name="Chung M.K."/>
            <person name="Conn L."/>
            <person name="Conway A.B."/>
            <person name="Conway A.R."/>
            <person name="Creasy T.H."/>
            <person name="Dewar K."/>
            <person name="Dunn P."/>
            <person name="Etgu P."/>
            <person name="Feldblyum T.V."/>
            <person name="Feng J.-D."/>
            <person name="Fong B."/>
            <person name="Fujii C.Y."/>
            <person name="Gill J.E."/>
            <person name="Goldsmith A.D."/>
            <person name="Haas B."/>
            <person name="Hansen N.F."/>
            <person name="Hughes B."/>
            <person name="Huizar L."/>
            <person name="Hunter J.L."/>
            <person name="Jenkins J."/>
            <person name="Johnson-Hopson C."/>
            <person name="Khan S."/>
            <person name="Khaykin E."/>
            <person name="Kim C.J."/>
            <person name="Koo H.L."/>
            <person name="Kremenetskaia I."/>
            <person name="Kurtz D.B."/>
            <person name="Kwan A."/>
            <person name="Lam B."/>
            <person name="Langin-Hooper S."/>
            <person name="Lee A."/>
            <person name="Lee J.M."/>
            <person name="Lenz C.A."/>
            <person name="Li J.H."/>
            <person name="Li Y.-P."/>
            <person name="Lin X."/>
            <person name="Liu S.X."/>
            <person name="Liu Z.A."/>
            <person name="Luros J.S."/>
            <person name="Maiti R."/>
            <person name="Marziali A."/>
            <person name="Militscher J."/>
            <person name="Miranda M."/>
            <person name="Nguyen M."/>
            <person name="Nierman W.C."/>
            <person name="Osborne B.I."/>
            <person name="Pai G."/>
            <person name="Peterson J."/>
            <person name="Pham P.K."/>
            <person name="Rizzo M."/>
            <person name="Rooney T."/>
            <person name="Rowley D."/>
            <person name="Sakano H."/>
            <person name="Salzberg S.L."/>
            <person name="Schwartz J.R."/>
            <person name="Shinn P."/>
            <person name="Southwick A.M."/>
            <person name="Sun H."/>
            <person name="Tallon L.J."/>
            <person name="Tambunga G."/>
            <person name="Toriumi M.J."/>
            <person name="Town C.D."/>
            <person name="Utterback T."/>
            <person name="Van Aken S."/>
            <person name="Vaysberg M."/>
            <person name="Vysotskaia V.S."/>
            <person name="Walker M."/>
            <person name="Wu D."/>
            <person name="Yu G."/>
            <person name="Fraser C.M."/>
            <person name="Venter J.C."/>
            <person name="Davis R.W."/>
        </authorList>
    </citation>
    <scope>NUCLEOTIDE SEQUENCE [LARGE SCALE GENOMIC DNA]</scope>
    <source>
        <strain>cv. Columbia</strain>
    </source>
</reference>
<reference key="2">
    <citation type="journal article" date="2017" name="Plant J.">
        <title>Araport11: a complete reannotation of the Arabidopsis thaliana reference genome.</title>
        <authorList>
            <person name="Cheng C.Y."/>
            <person name="Krishnakumar V."/>
            <person name="Chan A.P."/>
            <person name="Thibaud-Nissen F."/>
            <person name="Schobel S."/>
            <person name="Town C.D."/>
        </authorList>
    </citation>
    <scope>GENOME REANNOTATION</scope>
    <source>
        <strain>cv. Columbia</strain>
    </source>
</reference>
<reference key="3">
    <citation type="journal article" date="2005" name="Plant Physiol.">
        <title>Genome organization of more than 300 defensin-like genes in Arabidopsis.</title>
        <authorList>
            <person name="Silverstein K.A.T."/>
            <person name="Graham M.A."/>
            <person name="Paape T.D."/>
            <person name="VandenBosch K.A."/>
        </authorList>
    </citation>
    <scope>GENE FAMILY</scope>
</reference>
<evidence type="ECO:0000250" key="1"/>
<evidence type="ECO:0000255" key="2"/>
<evidence type="ECO:0000305" key="3"/>
<feature type="signal peptide" evidence="2">
    <location>
        <begin position="1"/>
        <end position="21"/>
    </location>
</feature>
<feature type="chain" id="PRO_0000379608" description="Putative defensin-like protein 26">
    <location>
        <begin position="22"/>
        <end position="81"/>
    </location>
</feature>
<feature type="disulfide bond" evidence="1">
    <location>
        <begin position="33"/>
        <end position="81"/>
    </location>
</feature>
<feature type="disulfide bond" evidence="1">
    <location>
        <begin position="52"/>
        <end position="77"/>
    </location>
</feature>